<dbReference type="EC" id="2.7.1.71" evidence="1"/>
<dbReference type="EMBL" id="CP000031">
    <property type="protein sequence ID" value="AAV94921.1"/>
    <property type="molecule type" value="Genomic_DNA"/>
</dbReference>
<dbReference type="RefSeq" id="WP_011047371.1">
    <property type="nucleotide sequence ID" value="NC_003911.12"/>
</dbReference>
<dbReference type="SMR" id="Q5LSY0"/>
<dbReference type="STRING" id="246200.SPO1634"/>
<dbReference type="PaxDb" id="246200-SPO1634"/>
<dbReference type="KEGG" id="sil:SPO1634"/>
<dbReference type="eggNOG" id="COG0703">
    <property type="taxonomic scope" value="Bacteria"/>
</dbReference>
<dbReference type="HOGENOM" id="CLU_057607_2_0_5"/>
<dbReference type="OrthoDB" id="9800332at2"/>
<dbReference type="UniPathway" id="UPA00053">
    <property type="reaction ID" value="UER00088"/>
</dbReference>
<dbReference type="Proteomes" id="UP000001023">
    <property type="component" value="Chromosome"/>
</dbReference>
<dbReference type="GO" id="GO:0005829">
    <property type="term" value="C:cytosol"/>
    <property type="evidence" value="ECO:0007669"/>
    <property type="project" value="TreeGrafter"/>
</dbReference>
<dbReference type="GO" id="GO:0005524">
    <property type="term" value="F:ATP binding"/>
    <property type="evidence" value="ECO:0007669"/>
    <property type="project" value="UniProtKB-UniRule"/>
</dbReference>
<dbReference type="GO" id="GO:0000287">
    <property type="term" value="F:magnesium ion binding"/>
    <property type="evidence" value="ECO:0007669"/>
    <property type="project" value="UniProtKB-UniRule"/>
</dbReference>
<dbReference type="GO" id="GO:0004765">
    <property type="term" value="F:shikimate kinase activity"/>
    <property type="evidence" value="ECO:0007669"/>
    <property type="project" value="UniProtKB-UniRule"/>
</dbReference>
<dbReference type="GO" id="GO:0008652">
    <property type="term" value="P:amino acid biosynthetic process"/>
    <property type="evidence" value="ECO:0007669"/>
    <property type="project" value="UniProtKB-KW"/>
</dbReference>
<dbReference type="GO" id="GO:0009073">
    <property type="term" value="P:aromatic amino acid family biosynthetic process"/>
    <property type="evidence" value="ECO:0007669"/>
    <property type="project" value="UniProtKB-KW"/>
</dbReference>
<dbReference type="GO" id="GO:0009423">
    <property type="term" value="P:chorismate biosynthetic process"/>
    <property type="evidence" value="ECO:0007669"/>
    <property type="project" value="UniProtKB-UniRule"/>
</dbReference>
<dbReference type="CDD" id="cd00464">
    <property type="entry name" value="SK"/>
    <property type="match status" value="1"/>
</dbReference>
<dbReference type="Gene3D" id="3.40.50.300">
    <property type="entry name" value="P-loop containing nucleotide triphosphate hydrolases"/>
    <property type="match status" value="1"/>
</dbReference>
<dbReference type="HAMAP" id="MF_00109">
    <property type="entry name" value="Shikimate_kinase"/>
    <property type="match status" value="1"/>
</dbReference>
<dbReference type="InterPro" id="IPR027417">
    <property type="entry name" value="P-loop_NTPase"/>
</dbReference>
<dbReference type="InterPro" id="IPR031322">
    <property type="entry name" value="Shikimate/glucono_kinase"/>
</dbReference>
<dbReference type="InterPro" id="IPR000623">
    <property type="entry name" value="Shikimate_kinase/TSH1"/>
</dbReference>
<dbReference type="InterPro" id="IPR023000">
    <property type="entry name" value="Shikimate_kinase_CS"/>
</dbReference>
<dbReference type="NCBIfam" id="NF010552">
    <property type="entry name" value="PRK13946.1"/>
    <property type="match status" value="1"/>
</dbReference>
<dbReference type="PANTHER" id="PTHR21087">
    <property type="entry name" value="SHIKIMATE KINASE"/>
    <property type="match status" value="1"/>
</dbReference>
<dbReference type="PANTHER" id="PTHR21087:SF16">
    <property type="entry name" value="SHIKIMATE KINASE 1, CHLOROPLASTIC"/>
    <property type="match status" value="1"/>
</dbReference>
<dbReference type="Pfam" id="PF01202">
    <property type="entry name" value="SKI"/>
    <property type="match status" value="1"/>
</dbReference>
<dbReference type="PRINTS" id="PR01100">
    <property type="entry name" value="SHIKIMTKNASE"/>
</dbReference>
<dbReference type="SUPFAM" id="SSF52540">
    <property type="entry name" value="P-loop containing nucleoside triphosphate hydrolases"/>
    <property type="match status" value="1"/>
</dbReference>
<dbReference type="PROSITE" id="PS01128">
    <property type="entry name" value="SHIKIMATE_KINASE"/>
    <property type="match status" value="1"/>
</dbReference>
<gene>
    <name evidence="1" type="primary">aroK</name>
    <name type="ordered locus">SPO1634</name>
</gene>
<evidence type="ECO:0000255" key="1">
    <source>
        <dbReference type="HAMAP-Rule" id="MF_00109"/>
    </source>
</evidence>
<name>AROK_RUEPO</name>
<organism>
    <name type="scientific">Ruegeria pomeroyi (strain ATCC 700808 / DSM 15171 / DSS-3)</name>
    <name type="common">Silicibacter pomeroyi</name>
    <dbReference type="NCBI Taxonomy" id="246200"/>
    <lineage>
        <taxon>Bacteria</taxon>
        <taxon>Pseudomonadati</taxon>
        <taxon>Pseudomonadota</taxon>
        <taxon>Alphaproteobacteria</taxon>
        <taxon>Rhodobacterales</taxon>
        <taxon>Roseobacteraceae</taxon>
        <taxon>Ruegeria</taxon>
    </lineage>
</organism>
<proteinExistence type="inferred from homology"/>
<comment type="function">
    <text evidence="1">Catalyzes the specific phosphorylation of the 3-hydroxyl group of shikimic acid using ATP as a cosubstrate.</text>
</comment>
<comment type="catalytic activity">
    <reaction evidence="1">
        <text>shikimate + ATP = 3-phosphoshikimate + ADP + H(+)</text>
        <dbReference type="Rhea" id="RHEA:13121"/>
        <dbReference type="ChEBI" id="CHEBI:15378"/>
        <dbReference type="ChEBI" id="CHEBI:30616"/>
        <dbReference type="ChEBI" id="CHEBI:36208"/>
        <dbReference type="ChEBI" id="CHEBI:145989"/>
        <dbReference type="ChEBI" id="CHEBI:456216"/>
        <dbReference type="EC" id="2.7.1.71"/>
    </reaction>
</comment>
<comment type="cofactor">
    <cofactor evidence="1">
        <name>Mg(2+)</name>
        <dbReference type="ChEBI" id="CHEBI:18420"/>
    </cofactor>
    <text evidence="1">Binds 1 Mg(2+) ion per subunit.</text>
</comment>
<comment type="pathway">
    <text evidence="1">Metabolic intermediate biosynthesis; chorismate biosynthesis; chorismate from D-erythrose 4-phosphate and phosphoenolpyruvate: step 5/7.</text>
</comment>
<comment type="subunit">
    <text evidence="1">Monomer.</text>
</comment>
<comment type="subcellular location">
    <subcellularLocation>
        <location evidence="1">Cytoplasm</location>
    </subcellularLocation>
</comment>
<comment type="similarity">
    <text evidence="1">Belongs to the shikimate kinase family.</text>
</comment>
<keyword id="KW-0028">Amino-acid biosynthesis</keyword>
<keyword id="KW-0057">Aromatic amino acid biosynthesis</keyword>
<keyword id="KW-0067">ATP-binding</keyword>
<keyword id="KW-0963">Cytoplasm</keyword>
<keyword id="KW-0418">Kinase</keyword>
<keyword id="KW-0460">Magnesium</keyword>
<keyword id="KW-0479">Metal-binding</keyword>
<keyword id="KW-0547">Nucleotide-binding</keyword>
<keyword id="KW-1185">Reference proteome</keyword>
<keyword id="KW-0808">Transferase</keyword>
<feature type="chain" id="PRO_0000237936" description="Shikimate kinase">
    <location>
        <begin position="1"/>
        <end position="195"/>
    </location>
</feature>
<feature type="binding site" evidence="1">
    <location>
        <begin position="30"/>
        <end position="35"/>
    </location>
    <ligand>
        <name>ATP</name>
        <dbReference type="ChEBI" id="CHEBI:30616"/>
    </ligand>
</feature>
<feature type="binding site" evidence="1">
    <location>
        <position position="34"/>
    </location>
    <ligand>
        <name>Mg(2+)</name>
        <dbReference type="ChEBI" id="CHEBI:18420"/>
    </ligand>
</feature>
<feature type="binding site" evidence="1">
    <location>
        <position position="52"/>
    </location>
    <ligand>
        <name>substrate</name>
    </ligand>
</feature>
<feature type="binding site" evidence="1">
    <location>
        <position position="76"/>
    </location>
    <ligand>
        <name>substrate</name>
    </ligand>
</feature>
<feature type="binding site" evidence="1">
    <location>
        <position position="98"/>
    </location>
    <ligand>
        <name>substrate</name>
    </ligand>
</feature>
<feature type="binding site" evidence="1">
    <location>
        <position position="136"/>
    </location>
    <ligand>
        <name>ATP</name>
        <dbReference type="ChEBI" id="CHEBI:30616"/>
    </ligand>
</feature>
<feature type="binding site" evidence="1">
    <location>
        <position position="155"/>
    </location>
    <ligand>
        <name>substrate</name>
    </ligand>
</feature>
<sequence length="195" mass="21218">MSKIEHNSAKTIDGGAAALHKTVVMVGMMGAGKTAVGRALAQRLGVPFLDSDAEIESAANMSIPEIFERDGEAFFRDRESRVIARLLEGAPCVLSTGGGAFLAEANRRMISEHGVSVWLKADLTVLWNRVRHKDTRPLLRTADPRATLRALYEARVPLYSEADLCVISDGETSIEQMVDRVIAALATRKDVLELS</sequence>
<accession>Q5LSY0</accession>
<reference key="1">
    <citation type="journal article" date="2004" name="Nature">
        <title>Genome sequence of Silicibacter pomeroyi reveals adaptations to the marine environment.</title>
        <authorList>
            <person name="Moran M.A."/>
            <person name="Buchan A."/>
            <person name="Gonzalez J.M."/>
            <person name="Heidelberg J.F."/>
            <person name="Whitman W.B."/>
            <person name="Kiene R.P."/>
            <person name="Henriksen J.R."/>
            <person name="King G.M."/>
            <person name="Belas R."/>
            <person name="Fuqua C."/>
            <person name="Brinkac L.M."/>
            <person name="Lewis M."/>
            <person name="Johri S."/>
            <person name="Weaver B."/>
            <person name="Pai G."/>
            <person name="Eisen J.A."/>
            <person name="Rahe E."/>
            <person name="Sheldon W.M."/>
            <person name="Ye W."/>
            <person name="Miller T.R."/>
            <person name="Carlton J."/>
            <person name="Rasko D.A."/>
            <person name="Paulsen I.T."/>
            <person name="Ren Q."/>
            <person name="Daugherty S.C."/>
            <person name="DeBoy R.T."/>
            <person name="Dodson R.J."/>
            <person name="Durkin A.S."/>
            <person name="Madupu R."/>
            <person name="Nelson W.C."/>
            <person name="Sullivan S.A."/>
            <person name="Rosovitz M.J."/>
            <person name="Haft D.H."/>
            <person name="Selengut J."/>
            <person name="Ward N."/>
        </authorList>
    </citation>
    <scope>NUCLEOTIDE SEQUENCE [LARGE SCALE GENOMIC DNA]</scope>
    <source>
        <strain>ATCC 700808 / DSM 15171 / DSS-3</strain>
    </source>
</reference>
<reference key="2">
    <citation type="journal article" date="2014" name="Stand. Genomic Sci.">
        <title>An updated genome annotation for the model marine bacterium Ruegeria pomeroyi DSS-3.</title>
        <authorList>
            <person name="Rivers A.R."/>
            <person name="Smith C.B."/>
            <person name="Moran M.A."/>
        </authorList>
    </citation>
    <scope>GENOME REANNOTATION</scope>
    <source>
        <strain>ATCC 700808 / DSM 15171 / DSS-3</strain>
    </source>
</reference>
<protein>
    <recommendedName>
        <fullName evidence="1">Shikimate kinase</fullName>
        <shortName evidence="1">SK</shortName>
        <ecNumber evidence="1">2.7.1.71</ecNumber>
    </recommendedName>
</protein>